<feature type="chain" id="PRO_0000221425" description="Ribosome-inactivating protein luffacylin">
    <location>
        <begin position="1"/>
        <end position="14" status="greater than"/>
    </location>
</feature>
<feature type="non-terminal residue" evidence="2">
    <location>
        <position position="14"/>
    </location>
</feature>
<comment type="function">
    <text evidence="1">Has antifungal activity against F.oxysporum and M.arachidicola. Inhibits cell-free translation in rabbit reticulocyte lysate system. Has some N-glycosidase activity.</text>
</comment>
<comment type="catalytic activity">
    <reaction evidence="1">
        <text>Endohydrolysis of the N-glycosidic bond at one specific adenosine on the 28S rRNA.</text>
        <dbReference type="EC" id="3.2.2.22"/>
    </reaction>
</comment>
<name>RIPL_LUFAE</name>
<proteinExistence type="evidence at protein level"/>
<reference evidence="3" key="1">
    <citation type="journal article" date="2002" name="Peptides">
        <title>Isolation and characterization of luffacylin, a ribosome inactivating peptide with anti-fungal activity from sponge gourd (Luffa cylindrica) seeds.</title>
        <authorList>
            <person name="Parkash A."/>
            <person name="Ng T.B."/>
            <person name="Tso W.W."/>
        </authorList>
    </citation>
    <scope>PROTEIN SEQUENCE</scope>
    <scope>FUNCTION</scope>
    <source>
        <tissue evidence="1">Seed</tissue>
    </source>
</reference>
<dbReference type="EC" id="3.2.2.22"/>
<dbReference type="GO" id="GO:0030598">
    <property type="term" value="F:rRNA N-glycosylase activity"/>
    <property type="evidence" value="ECO:0007669"/>
    <property type="project" value="UniProtKB-EC"/>
</dbReference>
<dbReference type="GO" id="GO:0090729">
    <property type="term" value="F:toxin activity"/>
    <property type="evidence" value="ECO:0007669"/>
    <property type="project" value="UniProtKB-KW"/>
</dbReference>
<dbReference type="GO" id="GO:0050832">
    <property type="term" value="P:defense response to fungus"/>
    <property type="evidence" value="ECO:0007669"/>
    <property type="project" value="UniProtKB-KW"/>
</dbReference>
<dbReference type="GO" id="GO:0031640">
    <property type="term" value="P:killing of cells of another organism"/>
    <property type="evidence" value="ECO:0007669"/>
    <property type="project" value="UniProtKB-KW"/>
</dbReference>
<dbReference type="GO" id="GO:0017148">
    <property type="term" value="P:negative regulation of translation"/>
    <property type="evidence" value="ECO:0007669"/>
    <property type="project" value="UniProtKB-KW"/>
</dbReference>
<evidence type="ECO:0000269" key="1">
    <source>
    </source>
</evidence>
<evidence type="ECO:0000303" key="2">
    <source>
    </source>
</evidence>
<evidence type="ECO:0000305" key="3"/>
<sequence>PRGSPRTEYEAARR</sequence>
<protein>
    <recommendedName>
        <fullName>Ribosome-inactivating protein luffacylin</fullName>
        <ecNumber>3.2.2.22</ecNumber>
    </recommendedName>
    <alternativeName>
        <fullName>rRNA N-glycosidase</fullName>
    </alternativeName>
</protein>
<organism>
    <name type="scientific">Luffa aegyptiaca</name>
    <name type="common">Sponge gourd</name>
    <name type="synonym">Luffa cylindrica</name>
    <dbReference type="NCBI Taxonomy" id="3670"/>
    <lineage>
        <taxon>Eukaryota</taxon>
        <taxon>Viridiplantae</taxon>
        <taxon>Streptophyta</taxon>
        <taxon>Embryophyta</taxon>
        <taxon>Tracheophyta</taxon>
        <taxon>Spermatophyta</taxon>
        <taxon>Magnoliopsida</taxon>
        <taxon>eudicotyledons</taxon>
        <taxon>Gunneridae</taxon>
        <taxon>Pentapetalae</taxon>
        <taxon>rosids</taxon>
        <taxon>fabids</taxon>
        <taxon>Cucurbitales</taxon>
        <taxon>Cucurbitaceae</taxon>
        <taxon>Sicyoeae</taxon>
        <taxon>Luffa</taxon>
    </lineage>
</organism>
<accession>P84073</accession>
<keyword id="KW-0929">Antimicrobial</keyword>
<keyword id="KW-0903">Direct protein sequencing</keyword>
<keyword id="KW-0295">Fungicide</keyword>
<keyword id="KW-0326">Glycosidase</keyword>
<keyword id="KW-0378">Hydrolase</keyword>
<keyword id="KW-0652">Protein synthesis inhibitor</keyword>
<keyword id="KW-0800">Toxin</keyword>